<organism>
    <name type="scientific">Ralstonia pickettii (strain 12J)</name>
    <dbReference type="NCBI Taxonomy" id="402626"/>
    <lineage>
        <taxon>Bacteria</taxon>
        <taxon>Pseudomonadati</taxon>
        <taxon>Pseudomonadota</taxon>
        <taxon>Betaproteobacteria</taxon>
        <taxon>Burkholderiales</taxon>
        <taxon>Burkholderiaceae</taxon>
        <taxon>Ralstonia</taxon>
    </lineage>
</organism>
<name>MRAZ_RALPJ</name>
<protein>
    <recommendedName>
        <fullName>Transcriptional regulator MraZ</fullName>
    </recommendedName>
</protein>
<reference key="1">
    <citation type="submission" date="2008-05" db="EMBL/GenBank/DDBJ databases">
        <title>Complete sequence of chromosome 1 of Ralstonia pickettii 12J.</title>
        <authorList>
            <person name="Lucas S."/>
            <person name="Copeland A."/>
            <person name="Lapidus A."/>
            <person name="Glavina del Rio T."/>
            <person name="Dalin E."/>
            <person name="Tice H."/>
            <person name="Bruce D."/>
            <person name="Goodwin L."/>
            <person name="Pitluck S."/>
            <person name="Meincke L."/>
            <person name="Brettin T."/>
            <person name="Detter J.C."/>
            <person name="Han C."/>
            <person name="Kuske C.R."/>
            <person name="Schmutz J."/>
            <person name="Larimer F."/>
            <person name="Land M."/>
            <person name="Hauser L."/>
            <person name="Kyrpides N."/>
            <person name="Mikhailova N."/>
            <person name="Marsh T."/>
            <person name="Richardson P."/>
        </authorList>
    </citation>
    <scope>NUCLEOTIDE SEQUENCE [LARGE SCALE GENOMIC DNA]</scope>
    <source>
        <strain>12J</strain>
    </source>
</reference>
<gene>
    <name evidence="1" type="primary">mraZ</name>
    <name type="ordered locus">Rpic_3098</name>
</gene>
<proteinExistence type="inferred from homology"/>
<keyword id="KW-0963">Cytoplasm</keyword>
<keyword id="KW-0238">DNA-binding</keyword>
<keyword id="KW-0677">Repeat</keyword>
<keyword id="KW-0804">Transcription</keyword>
<keyword id="KW-0805">Transcription regulation</keyword>
<comment type="subunit">
    <text evidence="1">Forms oligomers.</text>
</comment>
<comment type="subcellular location">
    <subcellularLocation>
        <location evidence="1">Cytoplasm</location>
        <location evidence="1">Nucleoid</location>
    </subcellularLocation>
</comment>
<comment type="similarity">
    <text evidence="1">Belongs to the MraZ family.</text>
</comment>
<evidence type="ECO:0000255" key="1">
    <source>
        <dbReference type="HAMAP-Rule" id="MF_01008"/>
    </source>
</evidence>
<evidence type="ECO:0000255" key="2">
    <source>
        <dbReference type="PROSITE-ProRule" id="PRU01076"/>
    </source>
</evidence>
<accession>B2UCY6</accession>
<dbReference type="EMBL" id="CP001068">
    <property type="protein sequence ID" value="ACD28221.1"/>
    <property type="molecule type" value="Genomic_DNA"/>
</dbReference>
<dbReference type="SMR" id="B2UCY6"/>
<dbReference type="STRING" id="402626.Rpic_3098"/>
<dbReference type="KEGG" id="rpi:Rpic_3098"/>
<dbReference type="eggNOG" id="COG2001">
    <property type="taxonomic scope" value="Bacteria"/>
</dbReference>
<dbReference type="HOGENOM" id="CLU_107907_2_1_4"/>
<dbReference type="GO" id="GO:0005737">
    <property type="term" value="C:cytoplasm"/>
    <property type="evidence" value="ECO:0007669"/>
    <property type="project" value="UniProtKB-UniRule"/>
</dbReference>
<dbReference type="GO" id="GO:0009295">
    <property type="term" value="C:nucleoid"/>
    <property type="evidence" value="ECO:0007669"/>
    <property type="project" value="UniProtKB-SubCell"/>
</dbReference>
<dbReference type="GO" id="GO:0003700">
    <property type="term" value="F:DNA-binding transcription factor activity"/>
    <property type="evidence" value="ECO:0007669"/>
    <property type="project" value="UniProtKB-UniRule"/>
</dbReference>
<dbReference type="GO" id="GO:0000976">
    <property type="term" value="F:transcription cis-regulatory region binding"/>
    <property type="evidence" value="ECO:0007669"/>
    <property type="project" value="TreeGrafter"/>
</dbReference>
<dbReference type="GO" id="GO:2000143">
    <property type="term" value="P:negative regulation of DNA-templated transcription initiation"/>
    <property type="evidence" value="ECO:0007669"/>
    <property type="project" value="TreeGrafter"/>
</dbReference>
<dbReference type="CDD" id="cd16321">
    <property type="entry name" value="MraZ_C"/>
    <property type="match status" value="1"/>
</dbReference>
<dbReference type="CDD" id="cd16320">
    <property type="entry name" value="MraZ_N"/>
    <property type="match status" value="1"/>
</dbReference>
<dbReference type="Gene3D" id="3.40.1550.20">
    <property type="entry name" value="Transcriptional regulator MraZ domain"/>
    <property type="match status" value="1"/>
</dbReference>
<dbReference type="HAMAP" id="MF_01008">
    <property type="entry name" value="MraZ"/>
    <property type="match status" value="1"/>
</dbReference>
<dbReference type="InterPro" id="IPR003444">
    <property type="entry name" value="MraZ"/>
</dbReference>
<dbReference type="InterPro" id="IPR035644">
    <property type="entry name" value="MraZ_C"/>
</dbReference>
<dbReference type="InterPro" id="IPR020603">
    <property type="entry name" value="MraZ_dom"/>
</dbReference>
<dbReference type="InterPro" id="IPR035642">
    <property type="entry name" value="MraZ_N"/>
</dbReference>
<dbReference type="InterPro" id="IPR038619">
    <property type="entry name" value="MraZ_sf"/>
</dbReference>
<dbReference type="InterPro" id="IPR007159">
    <property type="entry name" value="SpoVT-AbrB_dom"/>
</dbReference>
<dbReference type="InterPro" id="IPR037914">
    <property type="entry name" value="SpoVT-AbrB_sf"/>
</dbReference>
<dbReference type="NCBIfam" id="TIGR00242">
    <property type="entry name" value="division/cell wall cluster transcriptional repressor MraZ"/>
    <property type="match status" value="1"/>
</dbReference>
<dbReference type="PANTHER" id="PTHR34701">
    <property type="entry name" value="TRANSCRIPTIONAL REGULATOR MRAZ"/>
    <property type="match status" value="1"/>
</dbReference>
<dbReference type="PANTHER" id="PTHR34701:SF1">
    <property type="entry name" value="TRANSCRIPTIONAL REGULATOR MRAZ"/>
    <property type="match status" value="1"/>
</dbReference>
<dbReference type="Pfam" id="PF02381">
    <property type="entry name" value="MraZ"/>
    <property type="match status" value="2"/>
</dbReference>
<dbReference type="SUPFAM" id="SSF89447">
    <property type="entry name" value="AbrB/MazE/MraZ-like"/>
    <property type="match status" value="1"/>
</dbReference>
<dbReference type="PROSITE" id="PS51740">
    <property type="entry name" value="SPOVT_ABRB"/>
    <property type="match status" value="2"/>
</dbReference>
<sequence>MFQGASALTLDAKGRMSIPSRHREALQLQAEGRVTVTKHPDGCLMLFPRPEWERFRERIAALPMEAHWWKRIFLGSAADVELDTAGRVLITPELRAAASLERDVMLLGMGSHFEVWDAATYTAKEQAAMAQGMPDALKNFSF</sequence>
<feature type="chain" id="PRO_1000191324" description="Transcriptional regulator MraZ">
    <location>
        <begin position="1"/>
        <end position="142"/>
    </location>
</feature>
<feature type="domain" description="SpoVT-AbrB 1" evidence="2">
    <location>
        <begin position="5"/>
        <end position="51"/>
    </location>
</feature>
<feature type="domain" description="SpoVT-AbrB 2" evidence="2">
    <location>
        <begin position="77"/>
        <end position="120"/>
    </location>
</feature>